<name>RS16_STRPN</name>
<accession>P66444</accession>
<accession>Q97RM8</accession>
<sequence>MAVKIRLTRMGSKKKPFYRINVADSRSPRDGRFIETVGTYNPLVAENQVTLKEDRVLAWLANGAQPSDTVRNILSKEGVLKKFHDSKFSK</sequence>
<reference key="1">
    <citation type="journal article" date="2001" name="Science">
        <title>Complete genome sequence of a virulent isolate of Streptococcus pneumoniae.</title>
        <authorList>
            <person name="Tettelin H."/>
            <person name="Nelson K.E."/>
            <person name="Paulsen I.T."/>
            <person name="Eisen J.A."/>
            <person name="Read T.D."/>
            <person name="Peterson S.N."/>
            <person name="Heidelberg J.F."/>
            <person name="DeBoy R.T."/>
            <person name="Haft D.H."/>
            <person name="Dodson R.J."/>
            <person name="Durkin A.S."/>
            <person name="Gwinn M.L."/>
            <person name="Kolonay J.F."/>
            <person name="Nelson W.C."/>
            <person name="Peterson J.D."/>
            <person name="Umayam L.A."/>
            <person name="White O."/>
            <person name="Salzberg S.L."/>
            <person name="Lewis M.R."/>
            <person name="Radune D."/>
            <person name="Holtzapple E.K."/>
            <person name="Khouri H.M."/>
            <person name="Wolf A.M."/>
            <person name="Utterback T.R."/>
            <person name="Hansen C.L."/>
            <person name="McDonald L.A."/>
            <person name="Feldblyum T.V."/>
            <person name="Angiuoli S.V."/>
            <person name="Dickinson T."/>
            <person name="Hickey E.K."/>
            <person name="Holt I.E."/>
            <person name="Loftus B.J."/>
            <person name="Yang F."/>
            <person name="Smith H.O."/>
            <person name="Venter J.C."/>
            <person name="Dougherty B.A."/>
            <person name="Morrison D.A."/>
            <person name="Hollingshead S.K."/>
            <person name="Fraser C.M."/>
        </authorList>
    </citation>
    <scope>NUCLEOTIDE SEQUENCE [LARGE SCALE GENOMIC DNA]</scope>
    <source>
        <strain>ATCC BAA-334 / TIGR4</strain>
    </source>
</reference>
<gene>
    <name evidence="1" type="primary">rpsP</name>
    <name type="ordered locus">SP_0775</name>
</gene>
<organism>
    <name type="scientific">Streptococcus pneumoniae serotype 4 (strain ATCC BAA-334 / TIGR4)</name>
    <dbReference type="NCBI Taxonomy" id="170187"/>
    <lineage>
        <taxon>Bacteria</taxon>
        <taxon>Bacillati</taxon>
        <taxon>Bacillota</taxon>
        <taxon>Bacilli</taxon>
        <taxon>Lactobacillales</taxon>
        <taxon>Streptococcaceae</taxon>
        <taxon>Streptococcus</taxon>
    </lineage>
</organism>
<proteinExistence type="evidence at protein level"/>
<evidence type="ECO:0000255" key="1">
    <source>
        <dbReference type="HAMAP-Rule" id="MF_00385"/>
    </source>
</evidence>
<evidence type="ECO:0000305" key="2"/>
<comment type="interaction">
    <interactant intactId="EBI-6472875">
        <id>P66444</id>
    </interactant>
    <interactant intactId="EBI-6472880">
        <id>A0A0H2URN5</id>
        <label>SP_1944</label>
    </interactant>
    <organismsDiffer>false</organismsDiffer>
    <experiments>3</experiments>
</comment>
<comment type="similarity">
    <text evidence="1">Belongs to the bacterial ribosomal protein bS16 family.</text>
</comment>
<keyword id="KW-1185">Reference proteome</keyword>
<keyword id="KW-0687">Ribonucleoprotein</keyword>
<keyword id="KW-0689">Ribosomal protein</keyword>
<dbReference type="EMBL" id="AE005672">
    <property type="protein sequence ID" value="AAK74913.1"/>
    <property type="molecule type" value="Genomic_DNA"/>
</dbReference>
<dbReference type="PIR" id="H95089">
    <property type="entry name" value="H95089"/>
</dbReference>
<dbReference type="RefSeq" id="WP_000268761.1">
    <property type="nucleotide sequence ID" value="NZ_CP155539.1"/>
</dbReference>
<dbReference type="SMR" id="P66444"/>
<dbReference type="IntAct" id="P66444">
    <property type="interactions" value="1"/>
</dbReference>
<dbReference type="PaxDb" id="170187-SP_0775"/>
<dbReference type="EnsemblBacteria" id="AAK74913">
    <property type="protein sequence ID" value="AAK74913"/>
    <property type="gene ID" value="SP_0775"/>
</dbReference>
<dbReference type="GeneID" id="45653854"/>
<dbReference type="KEGG" id="spn:SP_0775"/>
<dbReference type="eggNOG" id="COG0228">
    <property type="taxonomic scope" value="Bacteria"/>
</dbReference>
<dbReference type="PhylomeDB" id="P66444"/>
<dbReference type="BioCyc" id="SPNE170187:G1FZB-790-MONOMER"/>
<dbReference type="Proteomes" id="UP000000585">
    <property type="component" value="Chromosome"/>
</dbReference>
<dbReference type="GO" id="GO:0005737">
    <property type="term" value="C:cytoplasm"/>
    <property type="evidence" value="ECO:0007669"/>
    <property type="project" value="UniProtKB-ARBA"/>
</dbReference>
<dbReference type="GO" id="GO:0015935">
    <property type="term" value="C:small ribosomal subunit"/>
    <property type="evidence" value="ECO:0007669"/>
    <property type="project" value="TreeGrafter"/>
</dbReference>
<dbReference type="GO" id="GO:0003735">
    <property type="term" value="F:structural constituent of ribosome"/>
    <property type="evidence" value="ECO:0007669"/>
    <property type="project" value="InterPro"/>
</dbReference>
<dbReference type="GO" id="GO:0006412">
    <property type="term" value="P:translation"/>
    <property type="evidence" value="ECO:0007669"/>
    <property type="project" value="UniProtKB-UniRule"/>
</dbReference>
<dbReference type="FunFam" id="3.30.1320.10:FF:000002">
    <property type="entry name" value="30S ribosomal protein S16"/>
    <property type="match status" value="1"/>
</dbReference>
<dbReference type="Gene3D" id="3.30.1320.10">
    <property type="match status" value="1"/>
</dbReference>
<dbReference type="HAMAP" id="MF_00385">
    <property type="entry name" value="Ribosomal_bS16"/>
    <property type="match status" value="1"/>
</dbReference>
<dbReference type="InterPro" id="IPR000307">
    <property type="entry name" value="Ribosomal_bS16"/>
</dbReference>
<dbReference type="InterPro" id="IPR023803">
    <property type="entry name" value="Ribosomal_bS16_dom_sf"/>
</dbReference>
<dbReference type="NCBIfam" id="TIGR00002">
    <property type="entry name" value="S16"/>
    <property type="match status" value="1"/>
</dbReference>
<dbReference type="PANTHER" id="PTHR12919">
    <property type="entry name" value="30S RIBOSOMAL PROTEIN S16"/>
    <property type="match status" value="1"/>
</dbReference>
<dbReference type="PANTHER" id="PTHR12919:SF20">
    <property type="entry name" value="SMALL RIBOSOMAL SUBUNIT PROTEIN BS16M"/>
    <property type="match status" value="1"/>
</dbReference>
<dbReference type="Pfam" id="PF00886">
    <property type="entry name" value="Ribosomal_S16"/>
    <property type="match status" value="1"/>
</dbReference>
<dbReference type="SUPFAM" id="SSF54565">
    <property type="entry name" value="Ribosomal protein S16"/>
    <property type="match status" value="1"/>
</dbReference>
<protein>
    <recommendedName>
        <fullName evidence="1">Small ribosomal subunit protein bS16</fullName>
    </recommendedName>
    <alternativeName>
        <fullName evidence="2">30S ribosomal protein S16</fullName>
    </alternativeName>
</protein>
<feature type="chain" id="PRO_0000167257" description="Small ribosomal subunit protein bS16">
    <location>
        <begin position="1"/>
        <end position="90"/>
    </location>
</feature>